<accession>Q7XUR2</accession>
<proteinExistence type="evidence at transcript level"/>
<protein>
    <recommendedName>
        <fullName>Lysine-specific histone demethylase 1 homolog 3</fullName>
        <ecNumber>1.-.-.-</ecNumber>
    </recommendedName>
    <alternativeName>
        <fullName>Flavin-containing amine oxidase domain-containing protein 3</fullName>
    </alternativeName>
    <alternativeName>
        <fullName>Protein FLOWERING LOCUS D-LIKE</fullName>
    </alternativeName>
    <alternativeName>
        <fullName>Protein LSD1-LIKE 3</fullName>
    </alternativeName>
</protein>
<evidence type="ECO:0000250" key="1"/>
<evidence type="ECO:0000255" key="2">
    <source>
        <dbReference type="PROSITE-ProRule" id="PRU00247"/>
    </source>
</evidence>
<evidence type="ECO:0000256" key="3">
    <source>
        <dbReference type="SAM" id="MobiDB-lite"/>
    </source>
</evidence>
<evidence type="ECO:0000305" key="4"/>
<keyword id="KW-0156">Chromatin regulator</keyword>
<keyword id="KW-0274">FAD</keyword>
<keyword id="KW-0285">Flavoprotein</keyword>
<keyword id="KW-0560">Oxidoreductase</keyword>
<keyword id="KW-1185">Reference proteome</keyword>
<organism>
    <name type="scientific">Oryza sativa subsp. japonica</name>
    <name type="common">Rice</name>
    <dbReference type="NCBI Taxonomy" id="39947"/>
    <lineage>
        <taxon>Eukaryota</taxon>
        <taxon>Viridiplantae</taxon>
        <taxon>Streptophyta</taxon>
        <taxon>Embryophyta</taxon>
        <taxon>Tracheophyta</taxon>
        <taxon>Spermatophyta</taxon>
        <taxon>Magnoliopsida</taxon>
        <taxon>Liliopsida</taxon>
        <taxon>Poales</taxon>
        <taxon>Poaceae</taxon>
        <taxon>BOP clade</taxon>
        <taxon>Oryzoideae</taxon>
        <taxon>Oryzeae</taxon>
        <taxon>Oryzinae</taxon>
        <taxon>Oryza</taxon>
        <taxon>Oryza sativa</taxon>
    </lineage>
</organism>
<feature type="chain" id="PRO_0000342899" description="Lysine-specific histone demethylase 1 homolog 3">
    <location>
        <begin position="1"/>
        <end position="811"/>
    </location>
</feature>
<feature type="domain" description="SWIRM" evidence="2">
    <location>
        <begin position="88"/>
        <end position="189"/>
    </location>
</feature>
<feature type="region of interest" description="Disordered" evidence="3">
    <location>
        <begin position="1"/>
        <end position="79"/>
    </location>
</feature>
<feature type="region of interest" description="Disordered" evidence="3">
    <location>
        <begin position="790"/>
        <end position="811"/>
    </location>
</feature>
<feature type="compositionally biased region" description="Pro residues" evidence="3">
    <location>
        <begin position="1"/>
        <end position="10"/>
    </location>
</feature>
<feature type="compositionally biased region" description="Basic residues" evidence="3">
    <location>
        <begin position="44"/>
        <end position="55"/>
    </location>
</feature>
<feature type="compositionally biased region" description="Low complexity" evidence="3">
    <location>
        <begin position="56"/>
        <end position="71"/>
    </location>
</feature>
<feature type="binding site" evidence="1">
    <location>
        <position position="227"/>
    </location>
    <ligand>
        <name>FAD</name>
        <dbReference type="ChEBI" id="CHEBI:57692"/>
    </ligand>
</feature>
<feature type="binding site" evidence="1">
    <location>
        <position position="229"/>
    </location>
    <ligand>
        <name>FAD</name>
        <dbReference type="ChEBI" id="CHEBI:57692"/>
    </ligand>
</feature>
<feature type="binding site" evidence="1">
    <location>
        <position position="235"/>
    </location>
    <ligand>
        <name>FAD</name>
        <dbReference type="ChEBI" id="CHEBI:57692"/>
    </ligand>
</feature>
<feature type="binding site" evidence="1">
    <location>
        <position position="609"/>
    </location>
    <ligand>
        <name>FAD</name>
        <dbReference type="ChEBI" id="CHEBI:57692"/>
    </ligand>
</feature>
<feature type="sequence conflict" description="In Ref. 5; AK073751." evidence="4" ref="5">
    <original>A</original>
    <variation>P</variation>
    <location>
        <position position="95"/>
    </location>
</feature>
<feature type="sequence conflict" description="In Ref. 5; AK073751." evidence="4" ref="5">
    <original>V</original>
    <variation>G</variation>
    <location>
        <position position="383"/>
    </location>
</feature>
<feature type="sequence conflict" description="In Ref. 5; AK073751." evidence="4" ref="5">
    <original>S</original>
    <variation>A</variation>
    <location>
        <position position="399"/>
    </location>
</feature>
<name>LDL3_ORYSJ</name>
<dbReference type="EC" id="1.-.-.-"/>
<dbReference type="EMBL" id="AL606687">
    <property type="protein sequence ID" value="CAD41075.2"/>
    <property type="molecule type" value="Genomic_DNA"/>
</dbReference>
<dbReference type="EMBL" id="AP008210">
    <property type="protein sequence ID" value="BAF15459.1"/>
    <property type="molecule type" value="Genomic_DNA"/>
</dbReference>
<dbReference type="EMBL" id="AP014960">
    <property type="status" value="NOT_ANNOTATED_CDS"/>
    <property type="molecule type" value="Genomic_DNA"/>
</dbReference>
<dbReference type="EMBL" id="AK073751">
    <property type="status" value="NOT_ANNOTATED_CDS"/>
    <property type="molecule type" value="mRNA"/>
</dbReference>
<dbReference type="SMR" id="Q7XUR2"/>
<dbReference type="FunCoup" id="Q7XUR2">
    <property type="interactions" value="2409"/>
</dbReference>
<dbReference type="STRING" id="39947.Q7XUR2"/>
<dbReference type="PaxDb" id="39947-Q7XUR2"/>
<dbReference type="KEGG" id="dosa:Os04g0560300"/>
<dbReference type="eggNOG" id="KOG0029">
    <property type="taxonomic scope" value="Eukaryota"/>
</dbReference>
<dbReference type="HOGENOM" id="CLU_004498_5_0_1"/>
<dbReference type="InParanoid" id="Q7XUR2"/>
<dbReference type="Proteomes" id="UP000000763">
    <property type="component" value="Chromosome 4"/>
</dbReference>
<dbReference type="Proteomes" id="UP000059680">
    <property type="component" value="Chromosome 4"/>
</dbReference>
<dbReference type="GO" id="GO:0050660">
    <property type="term" value="F:flavin adenine dinucleotide binding"/>
    <property type="evidence" value="ECO:0007669"/>
    <property type="project" value="UniProtKB-ARBA"/>
</dbReference>
<dbReference type="GO" id="GO:0016491">
    <property type="term" value="F:oxidoreductase activity"/>
    <property type="evidence" value="ECO:0000318"/>
    <property type="project" value="GO_Central"/>
</dbReference>
<dbReference type="GO" id="GO:0052901">
    <property type="term" value="F:spermine oxidase activity"/>
    <property type="evidence" value="ECO:0007669"/>
    <property type="project" value="UniProtKB-ARBA"/>
</dbReference>
<dbReference type="GO" id="GO:0006325">
    <property type="term" value="P:chromatin organization"/>
    <property type="evidence" value="ECO:0007669"/>
    <property type="project" value="UniProtKB-KW"/>
</dbReference>
<dbReference type="GO" id="GO:0046208">
    <property type="term" value="P:spermine catabolic process"/>
    <property type="evidence" value="ECO:0007669"/>
    <property type="project" value="UniProtKB-ARBA"/>
</dbReference>
<dbReference type="GO" id="GO:1903602">
    <property type="term" value="P:thermospermine catabolic process"/>
    <property type="evidence" value="ECO:0007669"/>
    <property type="project" value="UniProtKB-ARBA"/>
</dbReference>
<dbReference type="FunFam" id="1.10.10.10:FF:000064">
    <property type="entry name" value="Lysine-specific histone demethylase 1A"/>
    <property type="match status" value="1"/>
</dbReference>
<dbReference type="Gene3D" id="3.90.660.10">
    <property type="match status" value="1"/>
</dbReference>
<dbReference type="Gene3D" id="3.50.50.60">
    <property type="entry name" value="FAD/NAD(P)-binding domain"/>
    <property type="match status" value="1"/>
</dbReference>
<dbReference type="Gene3D" id="1.10.10.10">
    <property type="entry name" value="Winged helix-like DNA-binding domain superfamily/Winged helix DNA-binding domain"/>
    <property type="match status" value="1"/>
</dbReference>
<dbReference type="InterPro" id="IPR002937">
    <property type="entry name" value="Amino_oxidase"/>
</dbReference>
<dbReference type="InterPro" id="IPR036188">
    <property type="entry name" value="FAD/NAD-bd_sf"/>
</dbReference>
<dbReference type="InterPro" id="IPR050281">
    <property type="entry name" value="Flavin_monoamine_oxidase"/>
</dbReference>
<dbReference type="InterPro" id="IPR009057">
    <property type="entry name" value="Homeodomain-like_sf"/>
</dbReference>
<dbReference type="InterPro" id="IPR007526">
    <property type="entry name" value="SWIRM"/>
</dbReference>
<dbReference type="InterPro" id="IPR036388">
    <property type="entry name" value="WH-like_DNA-bd_sf"/>
</dbReference>
<dbReference type="PANTHER" id="PTHR10742">
    <property type="entry name" value="FLAVIN MONOAMINE OXIDASE"/>
    <property type="match status" value="1"/>
</dbReference>
<dbReference type="PANTHER" id="PTHR10742:SF260">
    <property type="entry name" value="PROTEIN FLOWERING LOCUS D"/>
    <property type="match status" value="1"/>
</dbReference>
<dbReference type="Pfam" id="PF01593">
    <property type="entry name" value="Amino_oxidase"/>
    <property type="match status" value="1"/>
</dbReference>
<dbReference type="Pfam" id="PF04433">
    <property type="entry name" value="SWIRM"/>
    <property type="match status" value="1"/>
</dbReference>
<dbReference type="SUPFAM" id="SSF54373">
    <property type="entry name" value="FAD-linked reductases, C-terminal domain"/>
    <property type="match status" value="1"/>
</dbReference>
<dbReference type="SUPFAM" id="SSF51905">
    <property type="entry name" value="FAD/NAD(P)-binding domain"/>
    <property type="match status" value="1"/>
</dbReference>
<dbReference type="SUPFAM" id="SSF46689">
    <property type="entry name" value="Homeodomain-like"/>
    <property type="match status" value="1"/>
</dbReference>
<dbReference type="PROSITE" id="PS50934">
    <property type="entry name" value="SWIRM"/>
    <property type="match status" value="1"/>
</dbReference>
<comment type="function">
    <text evidence="1">Probable histone demethylase.</text>
</comment>
<comment type="cofactor">
    <cofactor evidence="4">
        <name>FAD</name>
        <dbReference type="ChEBI" id="CHEBI:57692"/>
    </cofactor>
</comment>
<comment type="similarity">
    <text evidence="4">Belongs to the flavin monoamine oxidase family.</text>
</comment>
<gene>
    <name type="ordered locus">Os04g0560300</name>
    <name type="ordered locus">LOC_Os04g47270</name>
    <name type="ORF">OSJNBa0084K11.6</name>
</gene>
<reference key="1">
    <citation type="journal article" date="2002" name="Nature">
        <title>Sequence and analysis of rice chromosome 4.</title>
        <authorList>
            <person name="Feng Q."/>
            <person name="Zhang Y."/>
            <person name="Hao P."/>
            <person name="Wang S."/>
            <person name="Fu G."/>
            <person name="Huang Y."/>
            <person name="Li Y."/>
            <person name="Zhu J."/>
            <person name="Liu Y."/>
            <person name="Hu X."/>
            <person name="Jia P."/>
            <person name="Zhang Y."/>
            <person name="Zhao Q."/>
            <person name="Ying K."/>
            <person name="Yu S."/>
            <person name="Tang Y."/>
            <person name="Weng Q."/>
            <person name="Zhang L."/>
            <person name="Lu Y."/>
            <person name="Mu J."/>
            <person name="Lu Y."/>
            <person name="Zhang L.S."/>
            <person name="Yu Z."/>
            <person name="Fan D."/>
            <person name="Liu X."/>
            <person name="Lu T."/>
            <person name="Li C."/>
            <person name="Wu Y."/>
            <person name="Sun T."/>
            <person name="Lei H."/>
            <person name="Li T."/>
            <person name="Hu H."/>
            <person name="Guan J."/>
            <person name="Wu M."/>
            <person name="Zhang R."/>
            <person name="Zhou B."/>
            <person name="Chen Z."/>
            <person name="Chen L."/>
            <person name="Jin Z."/>
            <person name="Wang R."/>
            <person name="Yin H."/>
            <person name="Cai Z."/>
            <person name="Ren S."/>
            <person name="Lv G."/>
            <person name="Gu W."/>
            <person name="Zhu G."/>
            <person name="Tu Y."/>
            <person name="Jia J."/>
            <person name="Zhang Y."/>
            <person name="Chen J."/>
            <person name="Kang H."/>
            <person name="Chen X."/>
            <person name="Shao C."/>
            <person name="Sun Y."/>
            <person name="Hu Q."/>
            <person name="Zhang X."/>
            <person name="Zhang W."/>
            <person name="Wang L."/>
            <person name="Ding C."/>
            <person name="Sheng H."/>
            <person name="Gu J."/>
            <person name="Chen S."/>
            <person name="Ni L."/>
            <person name="Zhu F."/>
            <person name="Chen W."/>
            <person name="Lan L."/>
            <person name="Lai Y."/>
            <person name="Cheng Z."/>
            <person name="Gu M."/>
            <person name="Jiang J."/>
            <person name="Li J."/>
            <person name="Hong G."/>
            <person name="Xue Y."/>
            <person name="Han B."/>
        </authorList>
    </citation>
    <scope>NUCLEOTIDE SEQUENCE [LARGE SCALE GENOMIC DNA]</scope>
    <source>
        <strain>cv. Nipponbare</strain>
    </source>
</reference>
<reference key="2">
    <citation type="journal article" date="2005" name="Nature">
        <title>The map-based sequence of the rice genome.</title>
        <authorList>
            <consortium name="International rice genome sequencing project (IRGSP)"/>
        </authorList>
    </citation>
    <scope>NUCLEOTIDE SEQUENCE [LARGE SCALE GENOMIC DNA]</scope>
    <source>
        <strain>cv. Nipponbare</strain>
    </source>
</reference>
<reference key="3">
    <citation type="journal article" date="2008" name="Nucleic Acids Res.">
        <title>The rice annotation project database (RAP-DB): 2008 update.</title>
        <authorList>
            <consortium name="The rice annotation project (RAP)"/>
        </authorList>
    </citation>
    <scope>GENOME REANNOTATION</scope>
    <source>
        <strain>cv. Nipponbare</strain>
    </source>
</reference>
<reference key="4">
    <citation type="journal article" date="2013" name="Rice">
        <title>Improvement of the Oryza sativa Nipponbare reference genome using next generation sequence and optical map data.</title>
        <authorList>
            <person name="Kawahara Y."/>
            <person name="de la Bastide M."/>
            <person name="Hamilton J.P."/>
            <person name="Kanamori H."/>
            <person name="McCombie W.R."/>
            <person name="Ouyang S."/>
            <person name="Schwartz D.C."/>
            <person name="Tanaka T."/>
            <person name="Wu J."/>
            <person name="Zhou S."/>
            <person name="Childs K.L."/>
            <person name="Davidson R.M."/>
            <person name="Lin H."/>
            <person name="Quesada-Ocampo L."/>
            <person name="Vaillancourt B."/>
            <person name="Sakai H."/>
            <person name="Lee S.S."/>
            <person name="Kim J."/>
            <person name="Numa H."/>
            <person name="Itoh T."/>
            <person name="Buell C.R."/>
            <person name="Matsumoto T."/>
        </authorList>
    </citation>
    <scope>GENOME REANNOTATION</scope>
    <source>
        <strain>cv. Nipponbare</strain>
    </source>
</reference>
<reference key="5">
    <citation type="journal article" date="2003" name="Science">
        <title>Collection, mapping, and annotation of over 28,000 cDNA clones from japonica rice.</title>
        <authorList>
            <consortium name="The rice full-length cDNA consortium"/>
        </authorList>
    </citation>
    <scope>NUCLEOTIDE SEQUENCE [LARGE SCALE MRNA]</scope>
    <source>
        <strain>cv. Nipponbare</strain>
    </source>
</reference>
<sequence length="811" mass="87396">MSDQPPPYTPLPLLSSFPPNPYPDQTPDPASTPTLVLPNPAFPNKRKRTGFRRKLPSGSPAAPVAVAASPSAQPPPRASAADDIIVINREPTAEAVTALTAGFPADSLTDEEIEAGVVSDVGGIEQVNYILIRNHLLTRWRETFNSWLAKESFATLIPPHCDHLLNAAYSFLVSHGHINFGVAPAIKERIPKEPTRHNTVIVVGAGLAGLAAARQLVAFGFKVVVLEGRKRCGGRVYTKKMEGGGRSAAGDLGGSVLTGTFGNPLGIVAKQLGLPMHKIRDKCPLYRPDGSPVDPEVDKKVEGTFNKLLDKSSLLRASMGDVAMDVSLGAALETLRQTDGDLSTDQEMNLFNWHLANLEYANAGLLSKLSLAFWDQDDPYDMVGDHCFLPGGNGRLVQSLAENVPIVYERTVHTIRYGGDGVQVVVNGGQVYEGDMALCTVPLGVLKNGGVKFVPELPQRKLDSIKRLGFGLLNKVAMLFPHVFWSTDLDTFGHLTEDPSHRGEFFLFYSYATVAGGPLLMALVAGEAAHNFETTPPTDAVSSVLKILRGIYEPQGIEVPDPLQSVCTRWGTDSFSLGSYSHVAVGASGDDYDILAESVGDGRLFFAGEATTRRYPATMHGAFISGLREAANITLHANARAAKSKVEKGPSTNTQACAALLMDLFRQPDLEFGSFSVIFGGQASDPKSPAILKVELGGPRKKGATEGGKADQHHSNKLLFQQLQSHFNQQQQLYVYTLLSRQQAMELREVRGGDEMRLHYLCEKLGVKLVGRKGLGPGADAVIASIKAERNSSRTKTRPSKLKIGIPKSKS</sequence>